<reference key="1">
    <citation type="journal article" date="1993" name="Mol. Biochem. Parasitol.">
        <title>Cloning and functional analysis of an extrachromosomally amplified multidrug resistance-like gene in Leishmania enriettii.</title>
        <authorList>
            <person name="Chow L.M.C."/>
            <person name="Wong A.K.C."/>
            <person name="Ullman B."/>
            <person name="Wirth D.F."/>
        </authorList>
    </citation>
    <scope>NUCLEOTIDE SEQUENCE</scope>
</reference>
<name>MDR1_LEIEN</name>
<proteinExistence type="inferred from homology"/>
<comment type="function">
    <text>Energy-dependent efflux pump responsible for decreased drug accumulation in multi-drug-resistant cells. Confers vinblastine resistance.</text>
</comment>
<comment type="catalytic activity">
    <reaction>
        <text>ATP + H2O + xenobioticSide 1 = ADP + phosphate + xenobioticSide 2.</text>
        <dbReference type="EC" id="7.6.2.2"/>
    </reaction>
</comment>
<comment type="subcellular location">
    <subcellularLocation>
        <location>Membrane</location>
        <topology>Multi-pass membrane protein</topology>
    </subcellularLocation>
</comment>
<comment type="similarity">
    <text evidence="4">Belongs to the ABC transporter superfamily. ABCB family. Multidrug resistance exporter (TC 3.A.1.201) subfamily.</text>
</comment>
<protein>
    <recommendedName>
        <fullName>Multidrug resistance protein 1</fullName>
        <ecNumber>7.6.2.2</ecNumber>
    </recommendedName>
    <alternativeName>
        <fullName>P-glycoprotein 1</fullName>
    </alternativeName>
</protein>
<evidence type="ECO:0000255" key="1"/>
<evidence type="ECO:0000255" key="2">
    <source>
        <dbReference type="PROSITE-ProRule" id="PRU00434"/>
    </source>
</evidence>
<evidence type="ECO:0000255" key="3">
    <source>
        <dbReference type="PROSITE-ProRule" id="PRU00441"/>
    </source>
</evidence>
<evidence type="ECO:0000305" key="4"/>
<accession>Q06034</accession>
<dbReference type="EC" id="7.6.2.2"/>
<dbReference type="EMBL" id="L08091">
    <property type="protein sequence ID" value="AAA16255.1"/>
    <property type="molecule type" value="Unassigned_DNA"/>
</dbReference>
<dbReference type="SMR" id="Q06034"/>
<dbReference type="GlyCosmos" id="Q06034">
    <property type="glycosylation" value="1 site, No reported glycans"/>
</dbReference>
<dbReference type="VEuPathDB" id="TriTrypDB:CUR178_01425"/>
<dbReference type="VEuPathDB" id="TriTrypDB:LENLEM3045_340014500"/>
<dbReference type="GO" id="GO:0005743">
    <property type="term" value="C:mitochondrial inner membrane"/>
    <property type="evidence" value="ECO:0007669"/>
    <property type="project" value="TreeGrafter"/>
</dbReference>
<dbReference type="GO" id="GO:0015421">
    <property type="term" value="F:ABC-type oligopeptide transporter activity"/>
    <property type="evidence" value="ECO:0007669"/>
    <property type="project" value="TreeGrafter"/>
</dbReference>
<dbReference type="GO" id="GO:0008559">
    <property type="term" value="F:ABC-type xenobiotic transporter activity"/>
    <property type="evidence" value="ECO:0007669"/>
    <property type="project" value="UniProtKB-EC"/>
</dbReference>
<dbReference type="GO" id="GO:0005524">
    <property type="term" value="F:ATP binding"/>
    <property type="evidence" value="ECO:0007669"/>
    <property type="project" value="UniProtKB-KW"/>
</dbReference>
<dbReference type="GO" id="GO:0016887">
    <property type="term" value="F:ATP hydrolysis activity"/>
    <property type="evidence" value="ECO:0007669"/>
    <property type="project" value="InterPro"/>
</dbReference>
<dbReference type="GO" id="GO:0090374">
    <property type="term" value="P:oligopeptide export from mitochondrion"/>
    <property type="evidence" value="ECO:0007669"/>
    <property type="project" value="TreeGrafter"/>
</dbReference>
<dbReference type="GO" id="GO:0046677">
    <property type="term" value="P:response to antibiotic"/>
    <property type="evidence" value="ECO:0007669"/>
    <property type="project" value="UniProtKB-KW"/>
</dbReference>
<dbReference type="CDD" id="cd18577">
    <property type="entry name" value="ABC_6TM_Pgp_ABCB1_D1_like"/>
    <property type="match status" value="1"/>
</dbReference>
<dbReference type="CDD" id="cd18578">
    <property type="entry name" value="ABC_6TM_Pgp_ABCB1_D2_like"/>
    <property type="match status" value="1"/>
</dbReference>
<dbReference type="CDD" id="cd03249">
    <property type="entry name" value="ABC_MTABC3_MDL1_MDL2"/>
    <property type="match status" value="1"/>
</dbReference>
<dbReference type="FunFam" id="3.40.50.300:FF:000836">
    <property type="entry name" value="ABC transporter B family member 25"/>
    <property type="match status" value="2"/>
</dbReference>
<dbReference type="Gene3D" id="1.20.1560.10">
    <property type="entry name" value="ABC transporter type 1, transmembrane domain"/>
    <property type="match status" value="3"/>
</dbReference>
<dbReference type="Gene3D" id="3.40.50.300">
    <property type="entry name" value="P-loop containing nucleotide triphosphate hydrolases"/>
    <property type="match status" value="2"/>
</dbReference>
<dbReference type="InterPro" id="IPR003593">
    <property type="entry name" value="AAA+_ATPase"/>
</dbReference>
<dbReference type="InterPro" id="IPR011527">
    <property type="entry name" value="ABC1_TM_dom"/>
</dbReference>
<dbReference type="InterPro" id="IPR036640">
    <property type="entry name" value="ABC1_TM_sf"/>
</dbReference>
<dbReference type="InterPro" id="IPR003439">
    <property type="entry name" value="ABC_transporter-like_ATP-bd"/>
</dbReference>
<dbReference type="InterPro" id="IPR017871">
    <property type="entry name" value="ABC_transporter-like_CS"/>
</dbReference>
<dbReference type="InterPro" id="IPR027417">
    <property type="entry name" value="P-loop_NTPase"/>
</dbReference>
<dbReference type="InterPro" id="IPR039421">
    <property type="entry name" value="Type_1_exporter"/>
</dbReference>
<dbReference type="PANTHER" id="PTHR43394">
    <property type="entry name" value="ATP-DEPENDENT PERMEASE MDL1, MITOCHONDRIAL"/>
    <property type="match status" value="1"/>
</dbReference>
<dbReference type="PANTHER" id="PTHR43394:SF27">
    <property type="entry name" value="ATP-DEPENDENT TRANSLOCASE ABCB1-LIKE"/>
    <property type="match status" value="1"/>
</dbReference>
<dbReference type="Pfam" id="PF00664">
    <property type="entry name" value="ABC_membrane"/>
    <property type="match status" value="2"/>
</dbReference>
<dbReference type="Pfam" id="PF00005">
    <property type="entry name" value="ABC_tran"/>
    <property type="match status" value="2"/>
</dbReference>
<dbReference type="SMART" id="SM00382">
    <property type="entry name" value="AAA"/>
    <property type="match status" value="2"/>
</dbReference>
<dbReference type="SUPFAM" id="SSF90123">
    <property type="entry name" value="ABC transporter transmembrane region"/>
    <property type="match status" value="2"/>
</dbReference>
<dbReference type="SUPFAM" id="SSF52540">
    <property type="entry name" value="P-loop containing nucleoside triphosphate hydrolases"/>
    <property type="match status" value="2"/>
</dbReference>
<dbReference type="PROSITE" id="PS50929">
    <property type="entry name" value="ABC_TM1F"/>
    <property type="match status" value="2"/>
</dbReference>
<dbReference type="PROSITE" id="PS00211">
    <property type="entry name" value="ABC_TRANSPORTER_1"/>
    <property type="match status" value="2"/>
</dbReference>
<dbReference type="PROSITE" id="PS50893">
    <property type="entry name" value="ABC_TRANSPORTER_2"/>
    <property type="match status" value="2"/>
</dbReference>
<organism>
    <name type="scientific">Leishmania enriettii</name>
    <dbReference type="NCBI Taxonomy" id="5663"/>
    <lineage>
        <taxon>Eukaryota</taxon>
        <taxon>Discoba</taxon>
        <taxon>Euglenozoa</taxon>
        <taxon>Kinetoplastea</taxon>
        <taxon>Metakinetoplastina</taxon>
        <taxon>Trypanosomatida</taxon>
        <taxon>Trypanosomatidae</taxon>
        <taxon>Leishmaniinae</taxon>
        <taxon>Leishmania</taxon>
    </lineage>
</organism>
<feature type="chain" id="PRO_0000093345" description="Multidrug resistance protein 1">
    <location>
        <begin position="1"/>
        <end position="1280"/>
    </location>
</feature>
<feature type="topological domain" description="Cytoplasmic" evidence="1">
    <location>
        <begin position="1"/>
        <end position="72"/>
    </location>
</feature>
<feature type="transmembrane region" description="Helical" evidence="3">
    <location>
        <begin position="73"/>
        <end position="93"/>
    </location>
</feature>
<feature type="transmembrane region" description="Helical" evidence="3">
    <location>
        <begin position="120"/>
        <end position="140"/>
    </location>
</feature>
<feature type="transmembrane region" description="Helical" evidence="3">
    <location>
        <begin position="189"/>
        <end position="209"/>
    </location>
</feature>
<feature type="transmembrane region" description="Helical" evidence="3">
    <location>
        <begin position="216"/>
        <end position="236"/>
    </location>
</feature>
<feature type="transmembrane region" description="Helical" evidence="3">
    <location>
        <begin position="297"/>
        <end position="317"/>
    </location>
</feature>
<feature type="transmembrane region" description="Helical" evidence="3">
    <location>
        <begin position="326"/>
        <end position="345"/>
    </location>
</feature>
<feature type="topological domain" description="Cytoplasmic" evidence="1">
    <location>
        <begin position="346"/>
        <end position="712"/>
    </location>
</feature>
<feature type="transmembrane region" description="Helical" evidence="3">
    <location>
        <begin position="713"/>
        <end position="733"/>
    </location>
</feature>
<feature type="transmembrane region" description="Helical" evidence="3">
    <location>
        <begin position="762"/>
        <end position="781"/>
    </location>
</feature>
<feature type="transmembrane region" description="Helical" evidence="3">
    <location>
        <begin position="837"/>
        <end position="857"/>
    </location>
</feature>
<feature type="transmembrane region" description="Helical" evidence="3">
    <location>
        <begin position="858"/>
        <end position="878"/>
    </location>
</feature>
<feature type="transmembrane region" description="Helical" evidence="3">
    <location>
        <begin position="938"/>
        <end position="958"/>
    </location>
</feature>
<feature type="transmembrane region" description="Helical" evidence="3">
    <location>
        <begin position="976"/>
        <end position="996"/>
    </location>
</feature>
<feature type="domain" description="ABC transmembrane type-1 1" evidence="3">
    <location>
        <begin position="72"/>
        <end position="357"/>
    </location>
</feature>
<feature type="domain" description="ABC transporter 1" evidence="2">
    <location>
        <begin position="391"/>
        <end position="634"/>
    </location>
</feature>
<feature type="domain" description="ABC transmembrane type-1 2" evidence="3">
    <location>
        <begin position="713"/>
        <end position="1002"/>
    </location>
</feature>
<feature type="domain" description="ABC transporter 2" evidence="2">
    <location>
        <begin position="1036"/>
        <end position="1274"/>
    </location>
</feature>
<feature type="binding site" evidence="2">
    <location>
        <begin position="426"/>
        <end position="433"/>
    </location>
    <ligand>
        <name>ATP</name>
        <dbReference type="ChEBI" id="CHEBI:30616"/>
        <label>1</label>
    </ligand>
</feature>
<feature type="binding site" evidence="2">
    <location>
        <begin position="1071"/>
        <end position="1078"/>
    </location>
    <ligand>
        <name>ATP</name>
        <dbReference type="ChEBI" id="CHEBI:30616"/>
        <label>2</label>
    </ligand>
</feature>
<feature type="glycosylation site" description="N-linked (GlcNAc...) asparagine" evidence="1">
    <location>
        <position position="1113"/>
    </location>
</feature>
<feature type="sequence variant">
    <original>G</original>
    <variation>D</variation>
    <location>
        <position position="286"/>
    </location>
</feature>
<sequence length="1280" mass="139729">MSRAHAAYANEGWSAPEGGIAGKDGSTRDCSGYGSQGPLFSAEEEVKGTVVRETVGPIEIFRYADATDRVLMIAGTAFAVACGAGMPVFSFIFGRIAMDLMSGVGSAEEKAAKTSLIMVYVGIAMLIACAGHVMCWTVAACRQVARIRLLFFRAVLRQDIGWHDEHSPGALTARMTGDTRVIQNGINDKLSQGIMNGSMGVIGYIAGFVFSWELTLMMIGMMPFIIVMAAIIGSIVSKITESSRKYFAKAGSLATEVMENIRTVQAFGREDYELERFTKAVLYAQGRGIRKELASNLSAAVIMALMYVSYTVAFFFGSYLVEWGRRDMADIISTFLAVLMGSFGLGFVAPSRTAFTESRAAAYEIFKAIDRVPPVDIDAGGVPVPGFKESIEFRNVRFAYPTRPGMILFRDLSLKIKCGQKVAFSGASGCGKSSVIGLIQRFYDPIGGAVLVDGVRMRELCLREWRDQIGIVSQEPNLFAGTMMENVRMGKPNATDEEVVEACRQANIHDTIMALPDRYDTPVGPVGSLLSGGQKQRIAIARALVKRPPILLLDEATSALDRKSEMEVQAALDQLIQRGGTTVVVIAHRLATIRDMDRIYYVKHDGAEGSRITESGTFDELLELDGEFAAVAKMQGVLAGDAKSGASVRDAKKASGHLGVILDEADLAQLDEDVPRTARQNVPIDELAKWEVKHAKVGFLRLMRMNKDKAWAVALGILSSVVIGSARPASSIVMGHMLRVLGEYSATKDVEALRSGTNLYAPLFIVFAVANFSGWILHGFYGYAGEHLTTKIRVLLFRQIMRQDINFFDIPGRDAGTLAGMLSGDCEAVHQLWGPSIGLKVQTMCIIASGLVVGFIYQWKLALVALACMPLMIGCSLTRRLMINGYTKSREGDTDDTIVTEALSNVRTVTSLNMKEDCVEAFQAALREEAPRSVRKGIIAGGIYGITQFIFYGVYALCFWYGSKLIDKGEAEFKDVMIASMSILFGAQNAGEAGAFATKLADAEASAKRVFSVIDRVPDVDIEQAGNKDLGEGCDIEYRNVQFIYSARPKQVVLASVNMRFGDATSNGLIGQTGCGKSTVIQMLARFYERRSGLISVNGRDLSSLDIAEWRRNISIVLQEPNLFSGTVRENIRYAREGATDEEVEEAARLAHIHHEIIKWTDGYDTEVGYKGRALSGGQKQRIAIARGLLRRPRLLLLDEATSALDSVTEAKVQEGIEAFQAKYKVTTVSIAHRLTTIRHCDQIILLDSGCIIEQGSHEELMALGGEYKTRYDLYMSALS</sequence>
<keyword id="KW-0046">Antibiotic resistance</keyword>
<keyword id="KW-0067">ATP-binding</keyword>
<keyword id="KW-0325">Glycoprotein</keyword>
<keyword id="KW-0472">Membrane</keyword>
<keyword id="KW-0547">Nucleotide-binding</keyword>
<keyword id="KW-0677">Repeat</keyword>
<keyword id="KW-1278">Translocase</keyword>
<keyword id="KW-0812">Transmembrane</keyword>
<keyword id="KW-1133">Transmembrane helix</keyword>
<keyword id="KW-0813">Transport</keyword>
<gene>
    <name type="primary">MDR1</name>
</gene>